<evidence type="ECO:0000250" key="1">
    <source>
        <dbReference type="UniProtKB" id="P04798"/>
    </source>
</evidence>
<evidence type="ECO:0000255" key="2"/>
<evidence type="ECO:0000269" key="3">
    <source>
    </source>
</evidence>
<evidence type="ECO:0000303" key="4">
    <source>
    </source>
</evidence>
<evidence type="ECO:0000305" key="5"/>
<accession>P9WEG9</accession>
<reference key="1">
    <citation type="journal article" date="2024" name="J. Am. Chem. Soc.">
        <title>Biosynthesis of Enfumafungin-type Antibiotic Reveals an Unusual Enzymatic Fusion Pattern and Unprecedented C-C Bond Cleavage.</title>
        <authorList>
            <person name="Cao Z.Q."/>
            <person name="Wang G.Q."/>
            <person name="Luo R."/>
            <person name="Gao Y.H."/>
            <person name="Lv J.M."/>
            <person name="Qin S.Y."/>
            <person name="Chen G.D."/>
            <person name="Awakawa T."/>
            <person name="Bao X.F."/>
            <person name="Mei Q.H."/>
            <person name="Yao X.S."/>
            <person name="Hu D."/>
            <person name="Abe I."/>
            <person name="Gao H."/>
        </authorList>
    </citation>
    <scope>NUCLEOTIDE SEQUENCE [GENOMIC DNA]</scope>
    <scope>FUNCTION</scope>
    <scope>CATALYTIC ACTIVITY</scope>
    <scope>PATHWAY</scope>
    <scope>BIOTECHNOLOGY</scope>
</reference>
<gene>
    <name evidence="4" type="primary">fsoE</name>
</gene>
<protein>
    <recommendedName>
        <fullName evidence="4">Cytochrome P450 monooxygenase fsoE</fullName>
        <ecNumber evidence="3">1.-.-.-</ecNumber>
    </recommendedName>
    <alternativeName>
        <fullName evidence="4">Fuscoatroside biosynthesis cluster protein E</fullName>
    </alternativeName>
</protein>
<name>FSOE_HUMFU</name>
<comment type="function">
    <text evidence="3">Cytochrome P450 monooxygenase; part of the gene cluster that mediates the biosynthesis of the enfumafungin-type antibiotic, fuscoatroside (PubMed:38654452). Within the pathway, fsoE catalyzes the oxidative cleavage of the c19-C20 bond within the E-ring, resulting in the formation of a carboxyl group and a methyl group. FsoE exhibits preferential substrate selectivity toward glycoside substrates over their aglycones (PubMed:38654452). The fuscoatroside biosynthesis is initiated by the cyclization of 2,3(S)-oxidosqualene through FsoA's terpene cyclase (TC) domain, leading to the formation of the fernane skeleton isomotiol, harboring a fernane triterpene skeleton with a C8-C9 double bond. Subsequently, C2-alpha-hydroxylation mediated by fsoD results in the production of 2-alpha-hydroxy-isomotiol, which is further acetylated by fsoF. The glycosyltransferase (GT) domain of FsoA may convert isomotiol, 2-alpha-hydroxy-isomotiol, and the acetylated derivative of 2-alpha-hydroxy-isomotiol into their corresponding glycosides 3-O-(beta-D-glucopyranosyl)-isomotiol, 3-O-(beta-D-glucopyranosyl)-2-alpha-hydroxy-isomotiol, and 3-O-(beta-D-glucopyranosyl)-2-alpha-acetoxy-isomotiol, which then undergo oxidative cleavage under the action of fsoE to form s 2-deacetoxy-fuscoatroside, 2-deacetyl-fuscoatroside, and fuscoatroside, respectively. Although hydroxylation followed by acetylation of 3-O-(beta-D-glucopyranosyl)-isomotiol and 2-deacetoxy-fuscoatroside by fsoD and fsoF could not be ruled out, this process is likely to occur with difficulty due to bulky steric hindrance caused by the presence of a glycan at C3 in these compounds. Interestingly, fsoE can also utilize the aglycones isomotiol and 2-alpha-hydroxy-isomotiol as substrates to generate 19-beta-hydroxy-isomotiol and 2-alpha,19-beta-dihydroxy-isomotiol, respectively. These reactions occur with lower efficiency. Finally, fsoE can further convert 2-alpha,19-beta-dihydroxy-isomotiol into 2-alpha-hydroxy-ismotiol-19-one and 2-alpha-hydroxy-ismotiol-19-one into 2-deacetyl-3-deglucopyranosyl-fuscoatroside (PubMed:38654452).</text>
</comment>
<comment type="catalytic activity">
    <reaction evidence="3">
        <text>3-O-(beta-D-glucopyranosyl)-isomotiol + 2 reduced [NADPH--hemoprotein reductase] + 2 O2 = 2-deacetoxyfuscoatroside + 2 oxidized [NADPH--hemoprotein reductase] + 2 H2O + 3 H(+)</text>
        <dbReference type="Rhea" id="RHEA:82747"/>
        <dbReference type="Rhea" id="RHEA-COMP:11964"/>
        <dbReference type="Rhea" id="RHEA-COMP:11965"/>
        <dbReference type="ChEBI" id="CHEBI:15377"/>
        <dbReference type="ChEBI" id="CHEBI:15378"/>
        <dbReference type="ChEBI" id="CHEBI:15379"/>
        <dbReference type="ChEBI" id="CHEBI:57618"/>
        <dbReference type="ChEBI" id="CHEBI:58210"/>
        <dbReference type="ChEBI" id="CHEBI:232474"/>
        <dbReference type="ChEBI" id="CHEBI:232478"/>
    </reaction>
    <physiologicalReaction direction="left-to-right" evidence="3">
        <dbReference type="Rhea" id="RHEA:82748"/>
    </physiologicalReaction>
</comment>
<comment type="catalytic activity">
    <reaction evidence="3">
        <text>3-O-(beta-D-glucopyranosyl)-2alpha-hydroxyisomotiol + 2 reduced [NADPH--hemoprotein reductase] + 2 O2 = 2-deacetylfuscoatroside + 2 oxidized [NADPH--hemoprotein reductase] + 2 H2O + 3 H(+)</text>
        <dbReference type="Rhea" id="RHEA:82751"/>
        <dbReference type="Rhea" id="RHEA-COMP:11964"/>
        <dbReference type="Rhea" id="RHEA-COMP:11965"/>
        <dbReference type="ChEBI" id="CHEBI:15377"/>
        <dbReference type="ChEBI" id="CHEBI:15378"/>
        <dbReference type="ChEBI" id="CHEBI:15379"/>
        <dbReference type="ChEBI" id="CHEBI:57618"/>
        <dbReference type="ChEBI" id="CHEBI:58210"/>
        <dbReference type="ChEBI" id="CHEBI:232475"/>
        <dbReference type="ChEBI" id="CHEBI:232479"/>
    </reaction>
    <physiologicalReaction direction="left-to-right" evidence="3">
        <dbReference type="Rhea" id="RHEA:82752"/>
    </physiologicalReaction>
</comment>
<comment type="catalytic activity">
    <reaction evidence="3">
        <text>3-O-(beta-D-glucopyranosyl)-2alpha-acetoxyisomotiol + 2 reduced [NADPH--hemoprotein reductase] + 2 O2 = fuscoatroside + 2 oxidized [NADPH--hemoprotein reductase] + 2 H2O + 3 H(+)</text>
        <dbReference type="Rhea" id="RHEA:82755"/>
        <dbReference type="Rhea" id="RHEA-COMP:11964"/>
        <dbReference type="Rhea" id="RHEA-COMP:11965"/>
        <dbReference type="ChEBI" id="CHEBI:15377"/>
        <dbReference type="ChEBI" id="CHEBI:15378"/>
        <dbReference type="ChEBI" id="CHEBI:15379"/>
        <dbReference type="ChEBI" id="CHEBI:57618"/>
        <dbReference type="ChEBI" id="CHEBI:58210"/>
        <dbReference type="ChEBI" id="CHEBI:232477"/>
        <dbReference type="ChEBI" id="CHEBI:232480"/>
    </reaction>
    <physiologicalReaction direction="left-to-right" evidence="3">
        <dbReference type="Rhea" id="RHEA:82756"/>
    </physiologicalReaction>
</comment>
<comment type="catalytic activity">
    <reaction evidence="3">
        <text>isomotiol + reduced [NADPH--hemoprotein reductase] + O2 = 19beta-hydroxyisomotiol + oxidized [NADPH--hemoprotein reductase] + H2O + H(+)</text>
        <dbReference type="Rhea" id="RHEA:82759"/>
        <dbReference type="Rhea" id="RHEA-COMP:11964"/>
        <dbReference type="Rhea" id="RHEA-COMP:11965"/>
        <dbReference type="ChEBI" id="CHEBI:15377"/>
        <dbReference type="ChEBI" id="CHEBI:15378"/>
        <dbReference type="ChEBI" id="CHEBI:15379"/>
        <dbReference type="ChEBI" id="CHEBI:57618"/>
        <dbReference type="ChEBI" id="CHEBI:58210"/>
        <dbReference type="ChEBI" id="CHEBI:232471"/>
        <dbReference type="ChEBI" id="CHEBI:232481"/>
    </reaction>
    <physiologicalReaction direction="left-to-right" evidence="3">
        <dbReference type="Rhea" id="RHEA:82760"/>
    </physiologicalReaction>
</comment>
<comment type="catalytic activity">
    <reaction evidence="3">
        <text>2alpha-hydroxyisomotiol + reduced [NADPH--hemoprotein reductase] + O2 = 2alpha,19beta-dihydroxyisomotiol + oxidized [NADPH--hemoprotein reductase] + H2O + H(+)</text>
        <dbReference type="Rhea" id="RHEA:82763"/>
        <dbReference type="Rhea" id="RHEA-COMP:11964"/>
        <dbReference type="Rhea" id="RHEA-COMP:11965"/>
        <dbReference type="ChEBI" id="CHEBI:15377"/>
        <dbReference type="ChEBI" id="CHEBI:15378"/>
        <dbReference type="ChEBI" id="CHEBI:15379"/>
        <dbReference type="ChEBI" id="CHEBI:57618"/>
        <dbReference type="ChEBI" id="CHEBI:58210"/>
        <dbReference type="ChEBI" id="CHEBI:232472"/>
        <dbReference type="ChEBI" id="CHEBI:232482"/>
    </reaction>
    <physiologicalReaction direction="left-to-right" evidence="3">
        <dbReference type="Rhea" id="RHEA:82764"/>
    </physiologicalReaction>
</comment>
<comment type="catalytic activity">
    <reaction evidence="3">
        <text>2alpha,19beta-dihydroxyisomotiol + reduced [NADPH--hemoprotein reductase] + O2 = 2alpha-hydroxyismotiol-19-one + oxidized [NADPH--hemoprotein reductase] + 2 H2O + H(+)</text>
        <dbReference type="Rhea" id="RHEA:82767"/>
        <dbReference type="Rhea" id="RHEA-COMP:11964"/>
        <dbReference type="Rhea" id="RHEA-COMP:11965"/>
        <dbReference type="ChEBI" id="CHEBI:15377"/>
        <dbReference type="ChEBI" id="CHEBI:15378"/>
        <dbReference type="ChEBI" id="CHEBI:15379"/>
        <dbReference type="ChEBI" id="CHEBI:57618"/>
        <dbReference type="ChEBI" id="CHEBI:58210"/>
        <dbReference type="ChEBI" id="CHEBI:232482"/>
        <dbReference type="ChEBI" id="CHEBI:232483"/>
    </reaction>
    <physiologicalReaction direction="left-to-right" evidence="3">
        <dbReference type="Rhea" id="RHEA:82768"/>
    </physiologicalReaction>
</comment>
<comment type="catalytic activity">
    <reaction evidence="3">
        <text>2alpha-hydroxyismotiol-19-one + 2 reduced [NADPH--hemoprotein reductase] + O2 = 2-deacetyl,3-deglucopyranosyl-fuscoatroside + 2 oxidized [NADPH--hemoprotein reductase] + H2O + 3 H(+)</text>
        <dbReference type="Rhea" id="RHEA:82771"/>
        <dbReference type="Rhea" id="RHEA-COMP:11964"/>
        <dbReference type="Rhea" id="RHEA-COMP:11965"/>
        <dbReference type="ChEBI" id="CHEBI:15377"/>
        <dbReference type="ChEBI" id="CHEBI:15378"/>
        <dbReference type="ChEBI" id="CHEBI:15379"/>
        <dbReference type="ChEBI" id="CHEBI:57618"/>
        <dbReference type="ChEBI" id="CHEBI:58210"/>
        <dbReference type="ChEBI" id="CHEBI:232483"/>
        <dbReference type="ChEBI" id="CHEBI:232484"/>
    </reaction>
    <physiologicalReaction direction="left-to-right" evidence="3">
        <dbReference type="Rhea" id="RHEA:82772"/>
    </physiologicalReaction>
</comment>
<comment type="cofactor">
    <cofactor evidence="1">
        <name>heme</name>
        <dbReference type="ChEBI" id="CHEBI:30413"/>
    </cofactor>
</comment>
<comment type="pathway">
    <text evidence="3">Secondary metabolite biosynthesis; terpenoid biosynthesis.</text>
</comment>
<comment type="subcellular location">
    <subcellularLocation>
        <location evidence="2">Membrane</location>
        <topology evidence="2">Single-pass membrane protein</topology>
    </subcellularLocation>
</comment>
<comment type="biotechnology">
    <text evidence="3">Fuscoatroside and some of its derivatives show interesting antifungal activity against Candida albicans and Aspergillus niger.</text>
</comment>
<comment type="similarity">
    <text evidence="5">Belongs to the cytochrome P450 family.</text>
</comment>
<organism>
    <name type="scientific">Humicola fuscoatra</name>
    <dbReference type="NCBI Taxonomy" id="112175"/>
    <lineage>
        <taxon>Eukaryota</taxon>
        <taxon>Fungi</taxon>
        <taxon>Dikarya</taxon>
        <taxon>Ascomycota</taxon>
        <taxon>Pezizomycotina</taxon>
        <taxon>Sordariomycetes</taxon>
        <taxon>Sordariomycetidae</taxon>
        <taxon>Sordariales</taxon>
        <taxon>Chaetomiaceae</taxon>
        <taxon>Humicola</taxon>
    </lineage>
</organism>
<feature type="chain" id="PRO_0000461498" description="Cytochrome P450 monooxygenase fsoE">
    <location>
        <begin position="1"/>
        <end position="578"/>
    </location>
</feature>
<feature type="transmembrane region" description="Helical" evidence="2">
    <location>
        <begin position="28"/>
        <end position="48"/>
    </location>
</feature>
<feature type="binding site" description="axial binding residue" evidence="1">
    <location>
        <position position="517"/>
    </location>
    <ligand>
        <name>heme</name>
        <dbReference type="ChEBI" id="CHEBI:30413"/>
    </ligand>
    <ligandPart>
        <name>Fe</name>
        <dbReference type="ChEBI" id="CHEBI:18248"/>
    </ligandPart>
</feature>
<sequence>MNSTLTSKMTVQDALVDNGLLGKGTRSLLMAVAITYAISWINWFFTSWQSSRAVAAAKRAGPGQLKRPPTLPSAVPVVGHIFQFLLGGHAFMSRAAKHYGLGVPVRINLATFPSYIVSGRDCVAAFLKDQGRQLSRIPRGLNYMEHAFGCPHEFVHQFKPRDDVDIEHQMHTALQTMLAGNGLEVLAGRYQTEVAHAALSTSLMGKEHEWTELPDLCSFVEDHVLEAATRALYGPHLVALNPTLARDFWTFNRRVKSMFMGVPKWLNPSAVRARDKMTDNVKRWQLYAAEHCNIDEIPDDVEWEPFYGSRYTRVRQKLLTKRDIMNESARAAENLAFIWATNANSVPSAIWFLLETLHDPSLEKQVRARLQAARTESTDENPLNFDVNKLTSDSLLQSMFAEILRLRVAALVVRQPTDAKGFSLPGGWHIKPKETLSMSTRTELMDPGVWNAGDAANPHPLDSFWAERFLVYPDDPRSGPLREPKRRFGAATNSEPYFSLDGCTWSWVPFGGGRQLCPGRHFAKCEILLTSAIFLSAFEIELLTDKLPGPDEGVYGFGTMPPNGKVPCRIRRRKIVSV</sequence>
<proteinExistence type="evidence at protein level"/>
<dbReference type="EC" id="1.-.-.-" evidence="3"/>
<dbReference type="EMBL" id="OR962264">
    <property type="protein sequence ID" value="XAF84280.1"/>
    <property type="molecule type" value="Genomic_DNA"/>
</dbReference>
<dbReference type="SMR" id="P9WEG9"/>
<dbReference type="UniPathway" id="UPA00213"/>
<dbReference type="GO" id="GO:0016020">
    <property type="term" value="C:membrane"/>
    <property type="evidence" value="ECO:0007669"/>
    <property type="project" value="UniProtKB-SubCell"/>
</dbReference>
<dbReference type="GO" id="GO:0020037">
    <property type="term" value="F:heme binding"/>
    <property type="evidence" value="ECO:0007669"/>
    <property type="project" value="InterPro"/>
</dbReference>
<dbReference type="GO" id="GO:0005506">
    <property type="term" value="F:iron ion binding"/>
    <property type="evidence" value="ECO:0007669"/>
    <property type="project" value="InterPro"/>
</dbReference>
<dbReference type="GO" id="GO:0016705">
    <property type="term" value="F:oxidoreductase activity, acting on paired donors, with incorporation or reduction of molecular oxygen"/>
    <property type="evidence" value="ECO:0007669"/>
    <property type="project" value="InterPro"/>
</dbReference>
<dbReference type="GO" id="GO:0008395">
    <property type="term" value="F:steroid hydroxylase activity"/>
    <property type="evidence" value="ECO:0007669"/>
    <property type="project" value="TreeGrafter"/>
</dbReference>
<dbReference type="CDD" id="cd11040">
    <property type="entry name" value="CYP7_CYP8-like"/>
    <property type="match status" value="1"/>
</dbReference>
<dbReference type="Gene3D" id="1.10.630.10">
    <property type="entry name" value="Cytochrome P450"/>
    <property type="match status" value="1"/>
</dbReference>
<dbReference type="InterPro" id="IPR050529">
    <property type="entry name" value="CYP450_sterol_14alpha_dmase"/>
</dbReference>
<dbReference type="InterPro" id="IPR001128">
    <property type="entry name" value="Cyt_P450"/>
</dbReference>
<dbReference type="InterPro" id="IPR002403">
    <property type="entry name" value="Cyt_P450_E_grp-IV"/>
</dbReference>
<dbReference type="InterPro" id="IPR036396">
    <property type="entry name" value="Cyt_P450_sf"/>
</dbReference>
<dbReference type="PANTHER" id="PTHR24304:SF2">
    <property type="entry name" value="24-HYDROXYCHOLESTEROL 7-ALPHA-HYDROXYLASE"/>
    <property type="match status" value="1"/>
</dbReference>
<dbReference type="PANTHER" id="PTHR24304">
    <property type="entry name" value="CYTOCHROME P450 FAMILY 7"/>
    <property type="match status" value="1"/>
</dbReference>
<dbReference type="Pfam" id="PF00067">
    <property type="entry name" value="p450"/>
    <property type="match status" value="1"/>
</dbReference>
<dbReference type="PRINTS" id="PR00465">
    <property type="entry name" value="EP450IV"/>
</dbReference>
<dbReference type="SUPFAM" id="SSF48264">
    <property type="entry name" value="Cytochrome P450"/>
    <property type="match status" value="1"/>
</dbReference>
<keyword id="KW-0349">Heme</keyword>
<keyword id="KW-0408">Iron</keyword>
<keyword id="KW-0472">Membrane</keyword>
<keyword id="KW-0479">Metal-binding</keyword>
<keyword id="KW-0503">Monooxygenase</keyword>
<keyword id="KW-0560">Oxidoreductase</keyword>
<keyword id="KW-0812">Transmembrane</keyword>
<keyword id="KW-1133">Transmembrane helix</keyword>